<sequence>MADPSASLNLVEACWRDLVLGVVQGLTEFLPISSTAHLKVVPELLGWGDPGVSVTAAIQLGSIAAVIAYFRTDLSQVLRGVSRAFRYGQWREPEARLGFAMVVGTLPILVIGLGIKFAWSQGYEQSPLRSIPSIAIVSIVMALLLALAEQVGARSKQLDVVLGRDGLLVGLAQALALLPGVSRSGSTLTAALFDGWQRADAARFSFLLGIPGITIAGLVELKDALAASPGNGPLPLLVGIGSAAVVSWLAIDWLLKFLQRNSTWLFVAYRLVFGLLLLVWWGVYGSH</sequence>
<evidence type="ECO:0000255" key="1">
    <source>
        <dbReference type="HAMAP-Rule" id="MF_01006"/>
    </source>
</evidence>
<accession>Q3AH68</accession>
<gene>
    <name evidence="1" type="primary">uppP</name>
    <name type="ordered locus">Syncc9605_2332</name>
</gene>
<protein>
    <recommendedName>
        <fullName evidence="1">Undecaprenyl-diphosphatase</fullName>
        <ecNumber evidence="1">3.6.1.27</ecNumber>
    </recommendedName>
    <alternativeName>
        <fullName evidence="1">Bacitracin resistance protein</fullName>
    </alternativeName>
    <alternativeName>
        <fullName evidence="1">Undecaprenyl pyrophosphate phosphatase</fullName>
    </alternativeName>
</protein>
<comment type="function">
    <text evidence="1">Catalyzes the dephosphorylation of undecaprenyl diphosphate (UPP). Confers resistance to bacitracin.</text>
</comment>
<comment type="catalytic activity">
    <reaction evidence="1">
        <text>di-trans,octa-cis-undecaprenyl diphosphate + H2O = di-trans,octa-cis-undecaprenyl phosphate + phosphate + H(+)</text>
        <dbReference type="Rhea" id="RHEA:28094"/>
        <dbReference type="ChEBI" id="CHEBI:15377"/>
        <dbReference type="ChEBI" id="CHEBI:15378"/>
        <dbReference type="ChEBI" id="CHEBI:43474"/>
        <dbReference type="ChEBI" id="CHEBI:58405"/>
        <dbReference type="ChEBI" id="CHEBI:60392"/>
        <dbReference type="EC" id="3.6.1.27"/>
    </reaction>
</comment>
<comment type="subcellular location">
    <subcellularLocation>
        <location evidence="1">Cell inner membrane</location>
        <topology evidence="1">Multi-pass membrane protein</topology>
    </subcellularLocation>
</comment>
<comment type="miscellaneous">
    <text>Bacitracin is thought to be involved in the inhibition of peptidoglycan synthesis by sequestering undecaprenyl diphosphate, thereby reducing the pool of lipid carrier available.</text>
</comment>
<comment type="similarity">
    <text evidence="1">Belongs to the UppP family.</text>
</comment>
<feature type="chain" id="PRO_0000250272" description="Undecaprenyl-diphosphatase">
    <location>
        <begin position="1"/>
        <end position="287"/>
    </location>
</feature>
<feature type="transmembrane region" description="Helical" evidence="1">
    <location>
        <begin position="50"/>
        <end position="70"/>
    </location>
</feature>
<feature type="transmembrane region" description="Helical" evidence="1">
    <location>
        <begin position="97"/>
        <end position="117"/>
    </location>
</feature>
<feature type="transmembrane region" description="Helical" evidence="1">
    <location>
        <begin position="131"/>
        <end position="151"/>
    </location>
</feature>
<feature type="transmembrane region" description="Helical" evidence="1">
    <location>
        <begin position="160"/>
        <end position="180"/>
    </location>
</feature>
<feature type="transmembrane region" description="Helical" evidence="1">
    <location>
        <begin position="206"/>
        <end position="226"/>
    </location>
</feature>
<feature type="transmembrane region" description="Helical" evidence="1">
    <location>
        <begin position="234"/>
        <end position="254"/>
    </location>
</feature>
<feature type="transmembrane region" description="Helical" evidence="1">
    <location>
        <begin position="264"/>
        <end position="284"/>
    </location>
</feature>
<dbReference type="EC" id="3.6.1.27" evidence="1"/>
<dbReference type="EMBL" id="CP000110">
    <property type="protein sequence ID" value="ABB36064.1"/>
    <property type="molecule type" value="Genomic_DNA"/>
</dbReference>
<dbReference type="RefSeq" id="WP_011365262.1">
    <property type="nucleotide sequence ID" value="NC_007516.1"/>
</dbReference>
<dbReference type="SMR" id="Q3AH68"/>
<dbReference type="STRING" id="110662.Syncc9605_2332"/>
<dbReference type="KEGG" id="syd:Syncc9605_2332"/>
<dbReference type="eggNOG" id="COG1968">
    <property type="taxonomic scope" value="Bacteria"/>
</dbReference>
<dbReference type="HOGENOM" id="CLU_060296_1_0_3"/>
<dbReference type="OrthoDB" id="9808289at2"/>
<dbReference type="GO" id="GO:0005886">
    <property type="term" value="C:plasma membrane"/>
    <property type="evidence" value="ECO:0007669"/>
    <property type="project" value="UniProtKB-SubCell"/>
</dbReference>
<dbReference type="GO" id="GO:0050380">
    <property type="term" value="F:undecaprenyl-diphosphatase activity"/>
    <property type="evidence" value="ECO:0007669"/>
    <property type="project" value="UniProtKB-UniRule"/>
</dbReference>
<dbReference type="GO" id="GO:0071555">
    <property type="term" value="P:cell wall organization"/>
    <property type="evidence" value="ECO:0007669"/>
    <property type="project" value="UniProtKB-KW"/>
</dbReference>
<dbReference type="GO" id="GO:0009252">
    <property type="term" value="P:peptidoglycan biosynthetic process"/>
    <property type="evidence" value="ECO:0007669"/>
    <property type="project" value="UniProtKB-KW"/>
</dbReference>
<dbReference type="GO" id="GO:0008360">
    <property type="term" value="P:regulation of cell shape"/>
    <property type="evidence" value="ECO:0007669"/>
    <property type="project" value="UniProtKB-KW"/>
</dbReference>
<dbReference type="GO" id="GO:0046677">
    <property type="term" value="P:response to antibiotic"/>
    <property type="evidence" value="ECO:0007669"/>
    <property type="project" value="UniProtKB-UniRule"/>
</dbReference>
<dbReference type="HAMAP" id="MF_01006">
    <property type="entry name" value="Undec_diphosphatase"/>
    <property type="match status" value="1"/>
</dbReference>
<dbReference type="InterPro" id="IPR003824">
    <property type="entry name" value="UppP"/>
</dbReference>
<dbReference type="NCBIfam" id="NF001394">
    <property type="entry name" value="PRK00281.2-5"/>
    <property type="match status" value="1"/>
</dbReference>
<dbReference type="NCBIfam" id="TIGR00753">
    <property type="entry name" value="undec_PP_bacA"/>
    <property type="match status" value="1"/>
</dbReference>
<dbReference type="PANTHER" id="PTHR30622">
    <property type="entry name" value="UNDECAPRENYL-DIPHOSPHATASE"/>
    <property type="match status" value="1"/>
</dbReference>
<dbReference type="PANTHER" id="PTHR30622:SF4">
    <property type="entry name" value="UNDECAPRENYL-DIPHOSPHATASE"/>
    <property type="match status" value="1"/>
</dbReference>
<dbReference type="Pfam" id="PF02673">
    <property type="entry name" value="BacA"/>
    <property type="match status" value="1"/>
</dbReference>
<name>UPPP_SYNSC</name>
<reference key="1">
    <citation type="submission" date="2005-07" db="EMBL/GenBank/DDBJ databases">
        <title>Complete sequence of Synechococcus sp. CC9605.</title>
        <authorList>
            <consortium name="US DOE Joint Genome Institute"/>
            <person name="Copeland A."/>
            <person name="Lucas S."/>
            <person name="Lapidus A."/>
            <person name="Barry K."/>
            <person name="Detter J.C."/>
            <person name="Glavina T."/>
            <person name="Hammon N."/>
            <person name="Israni S."/>
            <person name="Pitluck S."/>
            <person name="Schmutz J."/>
            <person name="Martinez M."/>
            <person name="Larimer F."/>
            <person name="Land M."/>
            <person name="Kyrpides N."/>
            <person name="Ivanova N."/>
            <person name="Richardson P."/>
        </authorList>
    </citation>
    <scope>NUCLEOTIDE SEQUENCE [LARGE SCALE GENOMIC DNA]</scope>
    <source>
        <strain>CC9605</strain>
    </source>
</reference>
<organism>
    <name type="scientific">Synechococcus sp. (strain CC9605)</name>
    <dbReference type="NCBI Taxonomy" id="110662"/>
    <lineage>
        <taxon>Bacteria</taxon>
        <taxon>Bacillati</taxon>
        <taxon>Cyanobacteriota</taxon>
        <taxon>Cyanophyceae</taxon>
        <taxon>Synechococcales</taxon>
        <taxon>Synechococcaceae</taxon>
        <taxon>Synechococcus</taxon>
    </lineage>
</organism>
<proteinExistence type="inferred from homology"/>
<keyword id="KW-0046">Antibiotic resistance</keyword>
<keyword id="KW-0997">Cell inner membrane</keyword>
<keyword id="KW-1003">Cell membrane</keyword>
<keyword id="KW-0133">Cell shape</keyword>
<keyword id="KW-0961">Cell wall biogenesis/degradation</keyword>
<keyword id="KW-0378">Hydrolase</keyword>
<keyword id="KW-0472">Membrane</keyword>
<keyword id="KW-0573">Peptidoglycan synthesis</keyword>
<keyword id="KW-0812">Transmembrane</keyword>
<keyword id="KW-1133">Transmembrane helix</keyword>